<dbReference type="EC" id="2.3.3.13" evidence="1"/>
<dbReference type="EMBL" id="AE017220">
    <property type="protein sequence ID" value="AAX64015.1"/>
    <property type="molecule type" value="Genomic_DNA"/>
</dbReference>
<dbReference type="RefSeq" id="WP_000082808.1">
    <property type="nucleotide sequence ID" value="NC_006905.1"/>
</dbReference>
<dbReference type="SMR" id="Q57TE6"/>
<dbReference type="KEGG" id="sec:SCH_0109"/>
<dbReference type="HOGENOM" id="CLU_022158_0_1_6"/>
<dbReference type="UniPathway" id="UPA00048">
    <property type="reaction ID" value="UER00070"/>
</dbReference>
<dbReference type="Proteomes" id="UP000000538">
    <property type="component" value="Chromosome"/>
</dbReference>
<dbReference type="GO" id="GO:0005829">
    <property type="term" value="C:cytosol"/>
    <property type="evidence" value="ECO:0007669"/>
    <property type="project" value="TreeGrafter"/>
</dbReference>
<dbReference type="GO" id="GO:0003852">
    <property type="term" value="F:2-isopropylmalate synthase activity"/>
    <property type="evidence" value="ECO:0007669"/>
    <property type="project" value="UniProtKB-UniRule"/>
</dbReference>
<dbReference type="GO" id="GO:0003985">
    <property type="term" value="F:acetyl-CoA C-acetyltransferase activity"/>
    <property type="evidence" value="ECO:0007669"/>
    <property type="project" value="UniProtKB-UniRule"/>
</dbReference>
<dbReference type="GO" id="GO:0030145">
    <property type="term" value="F:manganese ion binding"/>
    <property type="evidence" value="ECO:0007669"/>
    <property type="project" value="UniProtKB-UniRule"/>
</dbReference>
<dbReference type="GO" id="GO:0009098">
    <property type="term" value="P:L-leucine biosynthetic process"/>
    <property type="evidence" value="ECO:0007669"/>
    <property type="project" value="UniProtKB-UniRule"/>
</dbReference>
<dbReference type="CDD" id="cd07940">
    <property type="entry name" value="DRE_TIM_IPMS"/>
    <property type="match status" value="1"/>
</dbReference>
<dbReference type="FunFam" id="1.10.238.260:FF:000001">
    <property type="entry name" value="2-isopropylmalate synthase"/>
    <property type="match status" value="1"/>
</dbReference>
<dbReference type="FunFam" id="3.20.20.70:FF:000010">
    <property type="entry name" value="2-isopropylmalate synthase"/>
    <property type="match status" value="1"/>
</dbReference>
<dbReference type="FunFam" id="3.30.160.270:FF:000001">
    <property type="entry name" value="2-isopropylmalate synthase"/>
    <property type="match status" value="1"/>
</dbReference>
<dbReference type="Gene3D" id="1.10.238.260">
    <property type="match status" value="1"/>
</dbReference>
<dbReference type="Gene3D" id="3.30.160.270">
    <property type="match status" value="1"/>
</dbReference>
<dbReference type="Gene3D" id="3.20.20.70">
    <property type="entry name" value="Aldolase class I"/>
    <property type="match status" value="1"/>
</dbReference>
<dbReference type="HAMAP" id="MF_01025">
    <property type="entry name" value="LeuA_type1"/>
    <property type="match status" value="1"/>
</dbReference>
<dbReference type="InterPro" id="IPR050073">
    <property type="entry name" value="2-IPM_HCS-like"/>
</dbReference>
<dbReference type="InterPro" id="IPR013709">
    <property type="entry name" value="2-isopropylmalate_synth_dimer"/>
</dbReference>
<dbReference type="InterPro" id="IPR002034">
    <property type="entry name" value="AIPM/Hcit_synth_CS"/>
</dbReference>
<dbReference type="InterPro" id="IPR013785">
    <property type="entry name" value="Aldolase_TIM"/>
</dbReference>
<dbReference type="InterPro" id="IPR054691">
    <property type="entry name" value="LeuA/HCS_post-cat"/>
</dbReference>
<dbReference type="InterPro" id="IPR036230">
    <property type="entry name" value="LeuA_allosteric_dom_sf"/>
</dbReference>
<dbReference type="InterPro" id="IPR005671">
    <property type="entry name" value="LeuA_bact_synth"/>
</dbReference>
<dbReference type="InterPro" id="IPR000891">
    <property type="entry name" value="PYR_CT"/>
</dbReference>
<dbReference type="NCBIfam" id="TIGR00973">
    <property type="entry name" value="leuA_bact"/>
    <property type="match status" value="1"/>
</dbReference>
<dbReference type="NCBIfam" id="NF002084">
    <property type="entry name" value="PRK00915.1-1"/>
    <property type="match status" value="1"/>
</dbReference>
<dbReference type="NCBIfam" id="NF002086">
    <property type="entry name" value="PRK00915.1-3"/>
    <property type="match status" value="1"/>
</dbReference>
<dbReference type="PANTHER" id="PTHR10277:SF9">
    <property type="entry name" value="2-ISOPROPYLMALATE SYNTHASE 1, CHLOROPLASTIC-RELATED"/>
    <property type="match status" value="1"/>
</dbReference>
<dbReference type="PANTHER" id="PTHR10277">
    <property type="entry name" value="HOMOCITRATE SYNTHASE-RELATED"/>
    <property type="match status" value="1"/>
</dbReference>
<dbReference type="Pfam" id="PF22617">
    <property type="entry name" value="HCS_D2"/>
    <property type="match status" value="1"/>
</dbReference>
<dbReference type="Pfam" id="PF00682">
    <property type="entry name" value="HMGL-like"/>
    <property type="match status" value="1"/>
</dbReference>
<dbReference type="Pfam" id="PF08502">
    <property type="entry name" value="LeuA_dimer"/>
    <property type="match status" value="1"/>
</dbReference>
<dbReference type="SMART" id="SM00917">
    <property type="entry name" value="LeuA_dimer"/>
    <property type="match status" value="1"/>
</dbReference>
<dbReference type="SUPFAM" id="SSF110921">
    <property type="entry name" value="2-isopropylmalate synthase LeuA, allosteric (dimerisation) domain"/>
    <property type="match status" value="1"/>
</dbReference>
<dbReference type="SUPFAM" id="SSF51569">
    <property type="entry name" value="Aldolase"/>
    <property type="match status" value="1"/>
</dbReference>
<dbReference type="PROSITE" id="PS00815">
    <property type="entry name" value="AIPM_HOMOCIT_SYNTH_1"/>
    <property type="match status" value="1"/>
</dbReference>
<dbReference type="PROSITE" id="PS00816">
    <property type="entry name" value="AIPM_HOMOCIT_SYNTH_2"/>
    <property type="match status" value="1"/>
</dbReference>
<dbReference type="PROSITE" id="PS50991">
    <property type="entry name" value="PYR_CT"/>
    <property type="match status" value="1"/>
</dbReference>
<evidence type="ECO:0000255" key="1">
    <source>
        <dbReference type="HAMAP-Rule" id="MF_01025"/>
    </source>
</evidence>
<reference key="1">
    <citation type="journal article" date="2005" name="Nucleic Acids Res.">
        <title>The genome sequence of Salmonella enterica serovar Choleraesuis, a highly invasive and resistant zoonotic pathogen.</title>
        <authorList>
            <person name="Chiu C.-H."/>
            <person name="Tang P."/>
            <person name="Chu C."/>
            <person name="Hu S."/>
            <person name="Bao Q."/>
            <person name="Yu J."/>
            <person name="Chou Y.-Y."/>
            <person name="Wang H.-S."/>
            <person name="Lee Y.-S."/>
        </authorList>
    </citation>
    <scope>NUCLEOTIDE SEQUENCE [LARGE SCALE GENOMIC DNA]</scope>
    <source>
        <strain>SC-B67</strain>
    </source>
</reference>
<proteinExistence type="inferred from homology"/>
<gene>
    <name evidence="1" type="primary">leuA</name>
    <name type="ordered locus">SCH_0109</name>
</gene>
<organism>
    <name type="scientific">Salmonella choleraesuis (strain SC-B67)</name>
    <dbReference type="NCBI Taxonomy" id="321314"/>
    <lineage>
        <taxon>Bacteria</taxon>
        <taxon>Pseudomonadati</taxon>
        <taxon>Pseudomonadota</taxon>
        <taxon>Gammaproteobacteria</taxon>
        <taxon>Enterobacterales</taxon>
        <taxon>Enterobacteriaceae</taxon>
        <taxon>Salmonella</taxon>
    </lineage>
</organism>
<accession>Q57TE6</accession>
<name>LEU1_SALCH</name>
<protein>
    <recommendedName>
        <fullName evidence="1">2-isopropylmalate synthase</fullName>
        <ecNumber evidence="1">2.3.3.13</ecNumber>
    </recommendedName>
    <alternativeName>
        <fullName evidence="1">Alpha-IPM synthase</fullName>
    </alternativeName>
    <alternativeName>
        <fullName evidence="1">Alpha-isopropylmalate synthase</fullName>
    </alternativeName>
</protein>
<sequence>MSQQVIIFDTTLRDGEQALQASLSAKEKLQIALALERMGVDVMEVGFPVSSPGDFESVQTIARTIKNSRVCALARCVEKDIDVAAQALKVADAFRIHTFIATSPMHIATKLRSTLDEVIERAVYMIKRARNYTDDVEFSCEDAGRTPVDDLARVVEAAINAGARTINIPDTVGYTMPFEFAGIISGLYERVPNIDKAIISVHTHDDLGIAVGNSLAAVHAGARQVEGAMNGIGERAGNCALEEVIMAIKVRKDIMNVHTNINHHEIWRTSQTVSQICNMPIPANKAIVGSGAFAHSSGIHQDGVLKNRENYEIMTPESIGLNQIQLNLTSRSGRAAVKHRMEEMGYKDTDYNMDHLYDAFLKLADKKGQVFDYDLEALAFINKQQEEPEHFRLDYFSVQSGSSDIATASVKLACGEEIKAEAANGNGPVDAIYQAINRITGYDVELVKYDLNAKGQGKDALGQVDIVVNHHGRRFHGVGLATDIVESSAKAMVHVLNNIWRAAEVEKELQRKAQNKENNKETV</sequence>
<keyword id="KW-0028">Amino-acid biosynthesis</keyword>
<keyword id="KW-0100">Branched-chain amino acid biosynthesis</keyword>
<keyword id="KW-0963">Cytoplasm</keyword>
<keyword id="KW-0432">Leucine biosynthesis</keyword>
<keyword id="KW-0464">Manganese</keyword>
<keyword id="KW-0479">Metal-binding</keyword>
<keyword id="KW-0808">Transferase</keyword>
<feature type="chain" id="PRO_1000149265" description="2-isopropylmalate synthase">
    <location>
        <begin position="1"/>
        <end position="523"/>
    </location>
</feature>
<feature type="domain" description="Pyruvate carboxyltransferase" evidence="1">
    <location>
        <begin position="5"/>
        <end position="267"/>
    </location>
</feature>
<feature type="region of interest" description="Regulatory domain" evidence="1">
    <location>
        <begin position="392"/>
        <end position="523"/>
    </location>
</feature>
<feature type="binding site" evidence="1">
    <location>
        <position position="14"/>
    </location>
    <ligand>
        <name>Mn(2+)</name>
        <dbReference type="ChEBI" id="CHEBI:29035"/>
    </ligand>
</feature>
<feature type="binding site" evidence="1">
    <location>
        <position position="202"/>
    </location>
    <ligand>
        <name>Mn(2+)</name>
        <dbReference type="ChEBI" id="CHEBI:29035"/>
    </ligand>
</feature>
<feature type="binding site" evidence="1">
    <location>
        <position position="204"/>
    </location>
    <ligand>
        <name>Mn(2+)</name>
        <dbReference type="ChEBI" id="CHEBI:29035"/>
    </ligand>
</feature>
<feature type="binding site" evidence="1">
    <location>
        <position position="238"/>
    </location>
    <ligand>
        <name>Mn(2+)</name>
        <dbReference type="ChEBI" id="CHEBI:29035"/>
    </ligand>
</feature>
<comment type="function">
    <text evidence="1">Catalyzes the condensation of the acetyl group of acetyl-CoA with 3-methyl-2-oxobutanoate (2-ketoisovalerate) to form 3-carboxy-3-hydroxy-4-methylpentanoate (2-isopropylmalate).</text>
</comment>
<comment type="catalytic activity">
    <reaction evidence="1">
        <text>3-methyl-2-oxobutanoate + acetyl-CoA + H2O = (2S)-2-isopropylmalate + CoA + H(+)</text>
        <dbReference type="Rhea" id="RHEA:21524"/>
        <dbReference type="ChEBI" id="CHEBI:1178"/>
        <dbReference type="ChEBI" id="CHEBI:11851"/>
        <dbReference type="ChEBI" id="CHEBI:15377"/>
        <dbReference type="ChEBI" id="CHEBI:15378"/>
        <dbReference type="ChEBI" id="CHEBI:57287"/>
        <dbReference type="ChEBI" id="CHEBI:57288"/>
        <dbReference type="EC" id="2.3.3.13"/>
    </reaction>
</comment>
<comment type="cofactor">
    <cofactor evidence="1">
        <name>Mn(2+)</name>
        <dbReference type="ChEBI" id="CHEBI:29035"/>
    </cofactor>
</comment>
<comment type="pathway">
    <text evidence="1">Amino-acid biosynthesis; L-leucine biosynthesis; L-leucine from 3-methyl-2-oxobutanoate: step 1/4.</text>
</comment>
<comment type="subunit">
    <text evidence="1">Homodimer.</text>
</comment>
<comment type="subcellular location">
    <subcellularLocation>
        <location evidence="1">Cytoplasm</location>
    </subcellularLocation>
</comment>
<comment type="similarity">
    <text evidence="1">Belongs to the alpha-IPM synthase/homocitrate synthase family. LeuA type 1 subfamily.</text>
</comment>